<sequence length="176" mass="19013">MTTIVSVRRNGHVVIAGDGQATLGNTVMKGNVKKVRRLYNDKVIAGFAGGTADAFTLFELFERKLEMHQGHLVKAAVELAKDWRTDRMLRKLEALLAVADETASLIITGNGDVVQPENDLIAIGSGGPYARAAARALLENTELGAREIAEKALDIAGDICIYTNHFHTIEELTAKA</sequence>
<dbReference type="EC" id="3.4.25.2" evidence="1"/>
<dbReference type="EMBL" id="AM933173">
    <property type="protein sequence ID" value="CAR39122.1"/>
    <property type="molecule type" value="Genomic_DNA"/>
</dbReference>
<dbReference type="RefSeq" id="WP_000208244.1">
    <property type="nucleotide sequence ID" value="NC_011274.1"/>
</dbReference>
<dbReference type="SMR" id="B5RF79"/>
<dbReference type="MEROPS" id="T01.006"/>
<dbReference type="KEGG" id="seg:SG3328"/>
<dbReference type="HOGENOM" id="CLU_093872_1_0_6"/>
<dbReference type="Proteomes" id="UP000008321">
    <property type="component" value="Chromosome"/>
</dbReference>
<dbReference type="GO" id="GO:0009376">
    <property type="term" value="C:HslUV protease complex"/>
    <property type="evidence" value="ECO:0007669"/>
    <property type="project" value="UniProtKB-UniRule"/>
</dbReference>
<dbReference type="GO" id="GO:0005839">
    <property type="term" value="C:proteasome core complex"/>
    <property type="evidence" value="ECO:0007669"/>
    <property type="project" value="InterPro"/>
</dbReference>
<dbReference type="GO" id="GO:0046872">
    <property type="term" value="F:metal ion binding"/>
    <property type="evidence" value="ECO:0007669"/>
    <property type="project" value="UniProtKB-KW"/>
</dbReference>
<dbReference type="GO" id="GO:0004298">
    <property type="term" value="F:threonine-type endopeptidase activity"/>
    <property type="evidence" value="ECO:0007669"/>
    <property type="project" value="UniProtKB-KW"/>
</dbReference>
<dbReference type="GO" id="GO:0051603">
    <property type="term" value="P:proteolysis involved in protein catabolic process"/>
    <property type="evidence" value="ECO:0007669"/>
    <property type="project" value="InterPro"/>
</dbReference>
<dbReference type="CDD" id="cd01913">
    <property type="entry name" value="protease_HslV"/>
    <property type="match status" value="1"/>
</dbReference>
<dbReference type="FunFam" id="3.60.20.10:FF:000002">
    <property type="entry name" value="ATP-dependent protease subunit HslV"/>
    <property type="match status" value="1"/>
</dbReference>
<dbReference type="Gene3D" id="3.60.20.10">
    <property type="entry name" value="Glutamine Phosphoribosylpyrophosphate, subunit 1, domain 1"/>
    <property type="match status" value="1"/>
</dbReference>
<dbReference type="HAMAP" id="MF_00248">
    <property type="entry name" value="HslV"/>
    <property type="match status" value="1"/>
</dbReference>
<dbReference type="InterPro" id="IPR022281">
    <property type="entry name" value="ATP-dep_Prtase_HsIV_su"/>
</dbReference>
<dbReference type="InterPro" id="IPR029055">
    <property type="entry name" value="Ntn_hydrolases_N"/>
</dbReference>
<dbReference type="InterPro" id="IPR001353">
    <property type="entry name" value="Proteasome_sua/b"/>
</dbReference>
<dbReference type="InterPro" id="IPR023333">
    <property type="entry name" value="Proteasome_suB-type"/>
</dbReference>
<dbReference type="NCBIfam" id="TIGR03692">
    <property type="entry name" value="ATP_dep_HslV"/>
    <property type="match status" value="1"/>
</dbReference>
<dbReference type="NCBIfam" id="NF003964">
    <property type="entry name" value="PRK05456.1"/>
    <property type="match status" value="1"/>
</dbReference>
<dbReference type="PANTHER" id="PTHR32194:SF0">
    <property type="entry name" value="ATP-DEPENDENT PROTEASE SUBUNIT HSLV"/>
    <property type="match status" value="1"/>
</dbReference>
<dbReference type="PANTHER" id="PTHR32194">
    <property type="entry name" value="METALLOPROTEASE TLDD"/>
    <property type="match status" value="1"/>
</dbReference>
<dbReference type="Pfam" id="PF00227">
    <property type="entry name" value="Proteasome"/>
    <property type="match status" value="1"/>
</dbReference>
<dbReference type="PIRSF" id="PIRSF039093">
    <property type="entry name" value="HslV"/>
    <property type="match status" value="1"/>
</dbReference>
<dbReference type="SUPFAM" id="SSF56235">
    <property type="entry name" value="N-terminal nucleophile aminohydrolases (Ntn hydrolases)"/>
    <property type="match status" value="1"/>
</dbReference>
<dbReference type="PROSITE" id="PS51476">
    <property type="entry name" value="PROTEASOME_BETA_2"/>
    <property type="match status" value="1"/>
</dbReference>
<protein>
    <recommendedName>
        <fullName evidence="1">ATP-dependent protease subunit HslV</fullName>
        <ecNumber evidence="1">3.4.25.2</ecNumber>
    </recommendedName>
    <alternativeName>
        <fullName evidence="1">Heat shock protein HslV</fullName>
    </alternativeName>
</protein>
<keyword id="KW-0021">Allosteric enzyme</keyword>
<keyword id="KW-0963">Cytoplasm</keyword>
<keyword id="KW-0378">Hydrolase</keyword>
<keyword id="KW-0479">Metal-binding</keyword>
<keyword id="KW-0645">Protease</keyword>
<keyword id="KW-0915">Sodium</keyword>
<keyword id="KW-0346">Stress response</keyword>
<keyword id="KW-0888">Threonine protease</keyword>
<name>HSLV_SALG2</name>
<organism>
    <name type="scientific">Salmonella gallinarum (strain 287/91 / NCTC 13346)</name>
    <dbReference type="NCBI Taxonomy" id="550538"/>
    <lineage>
        <taxon>Bacteria</taxon>
        <taxon>Pseudomonadati</taxon>
        <taxon>Pseudomonadota</taxon>
        <taxon>Gammaproteobacteria</taxon>
        <taxon>Enterobacterales</taxon>
        <taxon>Enterobacteriaceae</taxon>
        <taxon>Salmonella</taxon>
    </lineage>
</organism>
<proteinExistence type="inferred from homology"/>
<evidence type="ECO:0000255" key="1">
    <source>
        <dbReference type="HAMAP-Rule" id="MF_00248"/>
    </source>
</evidence>
<reference key="1">
    <citation type="journal article" date="2008" name="Genome Res.">
        <title>Comparative genome analysis of Salmonella enteritidis PT4 and Salmonella gallinarum 287/91 provides insights into evolutionary and host adaptation pathways.</title>
        <authorList>
            <person name="Thomson N.R."/>
            <person name="Clayton D.J."/>
            <person name="Windhorst D."/>
            <person name="Vernikos G."/>
            <person name="Davidson S."/>
            <person name="Churcher C."/>
            <person name="Quail M.A."/>
            <person name="Stevens M."/>
            <person name="Jones M.A."/>
            <person name="Watson M."/>
            <person name="Barron A."/>
            <person name="Layton A."/>
            <person name="Pickard D."/>
            <person name="Kingsley R.A."/>
            <person name="Bignell A."/>
            <person name="Clark L."/>
            <person name="Harris B."/>
            <person name="Ormond D."/>
            <person name="Abdellah Z."/>
            <person name="Brooks K."/>
            <person name="Cherevach I."/>
            <person name="Chillingworth T."/>
            <person name="Woodward J."/>
            <person name="Norberczak H."/>
            <person name="Lord A."/>
            <person name="Arrowsmith C."/>
            <person name="Jagels K."/>
            <person name="Moule S."/>
            <person name="Mungall K."/>
            <person name="Saunders M."/>
            <person name="Whitehead S."/>
            <person name="Chabalgoity J.A."/>
            <person name="Maskell D."/>
            <person name="Humphreys T."/>
            <person name="Roberts M."/>
            <person name="Barrow P.A."/>
            <person name="Dougan G."/>
            <person name="Parkhill J."/>
        </authorList>
    </citation>
    <scope>NUCLEOTIDE SEQUENCE [LARGE SCALE GENOMIC DNA]</scope>
    <source>
        <strain>287/91 / NCTC 13346</strain>
    </source>
</reference>
<gene>
    <name evidence="1" type="primary">hslV</name>
    <name type="ordered locus">SG3328</name>
</gene>
<feature type="chain" id="PRO_1000100911" description="ATP-dependent protease subunit HslV">
    <location>
        <begin position="1"/>
        <end position="176"/>
    </location>
</feature>
<feature type="active site" evidence="1">
    <location>
        <position position="2"/>
    </location>
</feature>
<feature type="binding site" evidence="1">
    <location>
        <position position="157"/>
    </location>
    <ligand>
        <name>Na(+)</name>
        <dbReference type="ChEBI" id="CHEBI:29101"/>
    </ligand>
</feature>
<feature type="binding site" evidence="1">
    <location>
        <position position="160"/>
    </location>
    <ligand>
        <name>Na(+)</name>
        <dbReference type="ChEBI" id="CHEBI:29101"/>
    </ligand>
</feature>
<feature type="binding site" evidence="1">
    <location>
        <position position="163"/>
    </location>
    <ligand>
        <name>Na(+)</name>
        <dbReference type="ChEBI" id="CHEBI:29101"/>
    </ligand>
</feature>
<comment type="function">
    <text evidence="1">Protease subunit of a proteasome-like degradation complex believed to be a general protein degrading machinery.</text>
</comment>
<comment type="catalytic activity">
    <reaction evidence="1">
        <text>ATP-dependent cleavage of peptide bonds with broad specificity.</text>
        <dbReference type="EC" id="3.4.25.2"/>
    </reaction>
</comment>
<comment type="activity regulation">
    <text evidence="1">Allosterically activated by HslU binding.</text>
</comment>
<comment type="subunit">
    <text evidence="1">A double ring-shaped homohexamer of HslV is capped on each side by a ring-shaped HslU homohexamer. The assembly of the HslU/HslV complex is dependent on binding of ATP.</text>
</comment>
<comment type="subcellular location">
    <subcellularLocation>
        <location evidence="1">Cytoplasm</location>
    </subcellularLocation>
</comment>
<comment type="induction">
    <text evidence="1">By heat shock.</text>
</comment>
<comment type="similarity">
    <text evidence="1">Belongs to the peptidase T1B family. HslV subfamily.</text>
</comment>
<accession>B5RF79</accession>